<keyword id="KW-0235">DNA replication</keyword>
<keyword id="KW-0238">DNA-binding</keyword>
<keyword id="KW-0239">DNA-directed DNA polymerase</keyword>
<keyword id="KW-0255">Endonuclease</keyword>
<keyword id="KW-0945">Host-virus interaction</keyword>
<keyword id="KW-0378">Hydrolase</keyword>
<keyword id="KW-1090">Inhibition of host innate immune response by virus</keyword>
<keyword id="KW-1113">Inhibition of host RLR pathway by virus</keyword>
<keyword id="KW-0460">Magnesium</keyword>
<keyword id="KW-0479">Metal-binding</keyword>
<keyword id="KW-0511">Multifunctional enzyme</keyword>
<keyword id="KW-0540">Nuclease</keyword>
<keyword id="KW-0548">Nucleotidyltransferase</keyword>
<keyword id="KW-0695">RNA-directed DNA polymerase</keyword>
<keyword id="KW-0808">Transferase</keyword>
<keyword id="KW-0899">Viral immunoevasion</keyword>
<name>DPOL_WHV3</name>
<feature type="chain" id="PRO_0000222352" description="Protein P">
    <location>
        <begin position="1"/>
        <end position="884"/>
    </location>
</feature>
<feature type="domain" description="Reverse transcriptase" evidence="1">
    <location>
        <begin position="398"/>
        <end position="639"/>
    </location>
</feature>
<feature type="region of interest" description="Terminal protein domain (TP)" evidence="1">
    <location>
        <begin position="1"/>
        <end position="184"/>
    </location>
</feature>
<feature type="region of interest" description="Spacer" evidence="1">
    <location>
        <begin position="185"/>
        <end position="387"/>
    </location>
</feature>
<feature type="region of interest" description="Disordered" evidence="2">
    <location>
        <begin position="218"/>
        <end position="241"/>
    </location>
</feature>
<feature type="region of interest" description="Disordered" evidence="2">
    <location>
        <begin position="299"/>
        <end position="345"/>
    </location>
</feature>
<feature type="region of interest" description="Polymerase/reverse transcriptase domain (RT)" evidence="1">
    <location>
        <begin position="388"/>
        <end position="729"/>
    </location>
</feature>
<feature type="compositionally biased region" description="Polar residues" evidence="2">
    <location>
        <begin position="222"/>
        <end position="241"/>
    </location>
</feature>
<feature type="compositionally biased region" description="Polar residues" evidence="2">
    <location>
        <begin position="323"/>
        <end position="332"/>
    </location>
</feature>
<feature type="binding site" evidence="1">
    <location>
        <position position="470"/>
    </location>
    <ligand>
        <name>Mg(2+)</name>
        <dbReference type="ChEBI" id="CHEBI:18420"/>
        <note>catalytic</note>
    </ligand>
</feature>
<feature type="binding site" evidence="1">
    <location>
        <position position="590"/>
    </location>
    <ligand>
        <name>Mg(2+)</name>
        <dbReference type="ChEBI" id="CHEBI:18420"/>
        <note>catalytic</note>
    </ligand>
</feature>
<feature type="binding site" evidence="1">
    <location>
        <position position="591"/>
    </location>
    <ligand>
        <name>Mg(2+)</name>
        <dbReference type="ChEBI" id="CHEBI:18420"/>
        <note>catalytic</note>
    </ligand>
</feature>
<feature type="site" description="Priming of reverse-transcription by covalently linking the first nucleotide of the (-)DNA" evidence="1">
    <location>
        <position position="68"/>
    </location>
</feature>
<gene>
    <name evidence="1" type="primary">P</name>
</gene>
<protein>
    <recommendedName>
        <fullName evidence="1">Protein P</fullName>
    </recommendedName>
    <domain>
        <recommendedName>
            <fullName evidence="1">DNA-directed DNA polymerase</fullName>
            <ecNumber evidence="1">2.7.7.7</ecNumber>
        </recommendedName>
    </domain>
    <domain>
        <recommendedName>
            <fullName evidence="1">RNA-directed DNA polymerase</fullName>
            <ecNumber evidence="1">2.7.7.49</ecNumber>
        </recommendedName>
    </domain>
    <domain>
        <recommendedName>
            <fullName evidence="1">Ribonuclease H</fullName>
            <ecNumber evidence="1">3.1.26.4</ecNumber>
        </recommendedName>
    </domain>
</protein>
<sequence>MHPFSRLFRNIQSLGEEEVQELLGPPEDALPLLAGEDLNHRVADALNLHLPTADLQWVHKTNAITGLYSNQAAQFNPHWIQPEFPELHLHNDLIQKLQQYFGPLTINEKRKLQLNFPARFFPKATKYFPLIKGIKNNYPNFALEHFFATANYLWTLWEAGILYLRKNQTTLTFKGKPYSWEHRQLVQHNGQQHKSHLQSRQNSSMVACSGHLLHNHLPSEPVSVSTRNLSNNISDKSQKSTRTGLCSYKQVQTDRLEHLARISCGSKITIGQQGSSPKTSYKSISSNFRNQTWAYNSSRNSGHTTWFSSASNSNKSRSREKAYSSNSTSQRYSPPLNYEKSDFSSPGVRGRITRLDNNGTLPQCLWRSFYNTKPCGSYCIHHIVSSLDDWGPCTVTGDVTIKSPRTPRRITGGVFLVDKNPNNSSESRLVVDFSQFSRGHTRVHWPKFAVPNLQTLANLLSTNLQWLSLDVSAAFYHIPISPAAVPHLLVGSPGLERFNTCMSSSTHNGNDSQLQTMHALCTRHVYSSLLLLFKTYGRKLHLLAHPFIMGFRKLPMGVGLSPFLLAQFTSAIASMVRRNFPHCVVFAYMDDLVLGARTSEHLTAIYSHICSVFLDLGIHLNVNKTKWWGNHLHFMGYVITSSGVLPQDKHVKKLSRYLRSVPVNQPLDYKICERLTGILNYVAPFTLCGYAALMPLYHAIASRTAFIFSSLYKSWLLSLYEELWPVVRQRGVVCTVFADATPTGWGIATTCQLLSGTFAFPLPIATAELIAACLARCWTGARLLGTDNSVVLSGKLTSFPWLLACVANWILRGTSFCYVPSALNPADLPSRGLLPVLRPLPRLRLRPQTSRISLWAASPPVSPRRPVRVAWSSPVQTCEPWIPP</sequence>
<accession>P12899</accession>
<proteinExistence type="inferred from homology"/>
<evidence type="ECO:0000255" key="1">
    <source>
        <dbReference type="HAMAP-Rule" id="MF_04073"/>
    </source>
</evidence>
<evidence type="ECO:0000256" key="2">
    <source>
        <dbReference type="SAM" id="MobiDB-lite"/>
    </source>
</evidence>
<organismHost>
    <name type="scientific">Marmota monax</name>
    <name type="common">Woodchuck</name>
    <dbReference type="NCBI Taxonomy" id="9995"/>
</organismHost>
<reference key="1">
    <citation type="journal article" date="1988" name="Virology">
        <title>Sequence comparison of woodchuck hepatitis virus replicative forms shows conservation of the genome.</title>
        <authorList>
            <person name="Cohen J.I."/>
            <person name="Miller R.H."/>
            <person name="Rosenblum B."/>
            <person name="Denniston K."/>
            <person name="Gerin J.L."/>
            <person name="Purcell R.H."/>
        </authorList>
    </citation>
    <scope>NUCLEOTIDE SEQUENCE [GENOMIC DNA]</scope>
</reference>
<reference key="2">
    <citation type="journal article" date="2007" name="World J. Gastroenterol.">
        <title>Hepatitis B virus replication.</title>
        <authorList>
            <person name="Beck J."/>
            <person name="Nassal M."/>
        </authorList>
    </citation>
    <scope>REVIEW</scope>
</reference>
<comment type="function">
    <text evidence="1">Multifunctional enzyme that converts the viral RNA genome into dsDNA in viral cytoplasmic capsids. This enzyme displays a DNA polymerase activity that can copy either DNA or RNA templates, and a ribonuclease H (RNase H) activity that cleaves the RNA strand of RNA-DNA heteroduplexes in a partially processive 3'- to 5'-endonucleasic mode. Neo-synthesized pregenomic RNA (pgRNA) are encapsidated together with the P protein, and reverse-transcribed inside the nucleocapsid. Initiation of reverse-transcription occurs first by binding the epsilon loop on the pgRNA genome, and is initiated by protein priming, thereby the 5'-end of (-)DNA is covalently linked to P protein. Partial (+)DNA is synthesized from the (-)DNA template and generates the relaxed circular DNA (RC-DNA) genome. After budding and infection, the RC-DNA migrates in the nucleus, and is converted into a plasmid-like covalently closed circular DNA (cccDNA). The activity of P protein does not seem to be necessary for cccDNA generation, and is presumably released from (+)DNA by host nuclear DNA repair machinery.</text>
</comment>
<comment type="catalytic activity">
    <reaction evidence="1">
        <text>DNA(n) + a 2'-deoxyribonucleoside 5'-triphosphate = DNA(n+1) + diphosphate</text>
        <dbReference type="Rhea" id="RHEA:22508"/>
        <dbReference type="Rhea" id="RHEA-COMP:17339"/>
        <dbReference type="Rhea" id="RHEA-COMP:17340"/>
        <dbReference type="ChEBI" id="CHEBI:33019"/>
        <dbReference type="ChEBI" id="CHEBI:61560"/>
        <dbReference type="ChEBI" id="CHEBI:173112"/>
        <dbReference type="EC" id="2.7.7.7"/>
    </reaction>
</comment>
<comment type="catalytic activity">
    <reaction evidence="1">
        <text>DNA(n) + a 2'-deoxyribonucleoside 5'-triphosphate = DNA(n+1) + diphosphate</text>
        <dbReference type="Rhea" id="RHEA:22508"/>
        <dbReference type="Rhea" id="RHEA-COMP:17339"/>
        <dbReference type="Rhea" id="RHEA-COMP:17340"/>
        <dbReference type="ChEBI" id="CHEBI:33019"/>
        <dbReference type="ChEBI" id="CHEBI:61560"/>
        <dbReference type="ChEBI" id="CHEBI:173112"/>
        <dbReference type="EC" id="2.7.7.49"/>
    </reaction>
</comment>
<comment type="catalytic activity">
    <reaction evidence="1">
        <text>Endonucleolytic cleavage to 5'-phosphomonoester.</text>
        <dbReference type="EC" id="3.1.26.4"/>
    </reaction>
</comment>
<comment type="activity regulation">
    <text evidence="1">Activated by host HSP70 and HSP40 in vitro to be able to bind the epsilon loop of the pgRNA. Because deletion of the RNase H region renders the protein partly chaperone-independent, the chaperones may be needed indirectly to relieve occlusion of the RNA-binding site by this domain. Inhibited by several reverse-transcriptase inhibitors: Lamivudine, Adefovir and Entecavir.</text>
</comment>
<comment type="domain">
    <text evidence="1">Terminal protein domain (TP) is hepadnavirus-specific. Spacer domain is highly variable and separates the TP and RT domains. Polymerase/reverse-transcriptase domain (RT) and ribonuclease H domain (RH) are similar to retrovirus reverse transcriptase/RNase H.</text>
</comment>
<comment type="domain">
    <text evidence="1">The polymerase/reverse transcriptase (RT) and ribonuclease H (RH) domains are structured in five subdomains: finger, palm, thumb, connection and RNase H. Within the palm subdomain, the 'primer grip' region is thought to be involved in the positioning of the primer terminus for accommodating the incoming nucleotide. The RH domain stabilizes the association of RT with primer-template.</text>
</comment>
<comment type="miscellaneous">
    <text evidence="1">Hepadnaviral virions contain probably just one P protein molecule per particle.</text>
</comment>
<comment type="similarity">
    <text evidence="1">Belongs to the hepadnaviridae P protein family.</text>
</comment>
<dbReference type="EC" id="2.7.7.7" evidence="1"/>
<dbReference type="EC" id="2.7.7.49" evidence="1"/>
<dbReference type="EC" id="3.1.26.4" evidence="1"/>
<dbReference type="EMBL" id="M19183">
    <property type="protein sequence ID" value="AAA46763.1"/>
    <property type="molecule type" value="Genomic_DNA"/>
</dbReference>
<dbReference type="PIR" id="G29969">
    <property type="entry name" value="JDVL59"/>
</dbReference>
<dbReference type="Proteomes" id="UP000007542">
    <property type="component" value="Genome"/>
</dbReference>
<dbReference type="GO" id="GO:0003677">
    <property type="term" value="F:DNA binding"/>
    <property type="evidence" value="ECO:0007669"/>
    <property type="project" value="UniProtKB-UniRule"/>
</dbReference>
<dbReference type="GO" id="GO:0003887">
    <property type="term" value="F:DNA-directed DNA polymerase activity"/>
    <property type="evidence" value="ECO:0007669"/>
    <property type="project" value="UniProtKB-UniRule"/>
</dbReference>
<dbReference type="GO" id="GO:0046872">
    <property type="term" value="F:metal ion binding"/>
    <property type="evidence" value="ECO:0007669"/>
    <property type="project" value="UniProtKB-UniRule"/>
</dbReference>
<dbReference type="GO" id="GO:0003964">
    <property type="term" value="F:RNA-directed DNA polymerase activity"/>
    <property type="evidence" value="ECO:0007669"/>
    <property type="project" value="UniProtKB-UniRule"/>
</dbReference>
<dbReference type="GO" id="GO:0004523">
    <property type="term" value="F:RNA-DNA hybrid ribonuclease activity"/>
    <property type="evidence" value="ECO:0007669"/>
    <property type="project" value="UniProtKB-UniRule"/>
</dbReference>
<dbReference type="GO" id="GO:0006260">
    <property type="term" value="P:DNA replication"/>
    <property type="evidence" value="ECO:0007669"/>
    <property type="project" value="UniProtKB-UniRule"/>
</dbReference>
<dbReference type="GO" id="GO:0052170">
    <property type="term" value="P:symbiont-mediated suppression of host innate immune response"/>
    <property type="evidence" value="ECO:0007669"/>
    <property type="project" value="UniProtKB-UniRule"/>
</dbReference>
<dbReference type="Gene3D" id="3.30.70.270">
    <property type="match status" value="1"/>
</dbReference>
<dbReference type="HAMAP" id="MF_04073">
    <property type="entry name" value="HBV_DPOL"/>
    <property type="match status" value="1"/>
</dbReference>
<dbReference type="InterPro" id="IPR043502">
    <property type="entry name" value="DNA/RNA_pol_sf"/>
</dbReference>
<dbReference type="InterPro" id="IPR001462">
    <property type="entry name" value="DNApol_viral_C"/>
</dbReference>
<dbReference type="InterPro" id="IPR000201">
    <property type="entry name" value="DNApol_viral_N"/>
</dbReference>
<dbReference type="InterPro" id="IPR037531">
    <property type="entry name" value="HBV_DPOL"/>
</dbReference>
<dbReference type="InterPro" id="IPR052055">
    <property type="entry name" value="Hepadnavirus_pol/RT"/>
</dbReference>
<dbReference type="InterPro" id="IPR043128">
    <property type="entry name" value="Rev_trsase/Diguanyl_cyclase"/>
</dbReference>
<dbReference type="InterPro" id="IPR000477">
    <property type="entry name" value="RT_dom"/>
</dbReference>
<dbReference type="PANTHER" id="PTHR33050">
    <property type="entry name" value="REVERSE TRANSCRIPTASE DOMAIN-CONTAINING PROTEIN"/>
    <property type="match status" value="1"/>
</dbReference>
<dbReference type="PANTHER" id="PTHR33050:SF7">
    <property type="entry name" value="RIBONUCLEASE H"/>
    <property type="match status" value="1"/>
</dbReference>
<dbReference type="Pfam" id="PF00336">
    <property type="entry name" value="DNA_pol_viral_C"/>
    <property type="match status" value="1"/>
</dbReference>
<dbReference type="Pfam" id="PF00242">
    <property type="entry name" value="DNA_pol_viral_N"/>
    <property type="match status" value="1"/>
</dbReference>
<dbReference type="Pfam" id="PF00078">
    <property type="entry name" value="RVT_1"/>
    <property type="match status" value="1"/>
</dbReference>
<dbReference type="SUPFAM" id="SSF56672">
    <property type="entry name" value="DNA/RNA polymerases"/>
    <property type="match status" value="1"/>
</dbReference>
<dbReference type="PROSITE" id="PS50878">
    <property type="entry name" value="RT_POL"/>
    <property type="match status" value="1"/>
</dbReference>
<organism>
    <name type="scientific">Woodchuck hepatitis B virus (isolate 59)</name>
    <name type="common">WHV</name>
    <dbReference type="NCBI Taxonomy" id="10431"/>
    <lineage>
        <taxon>Viruses</taxon>
        <taxon>Riboviria</taxon>
        <taxon>Pararnavirae</taxon>
        <taxon>Artverviricota</taxon>
        <taxon>Revtraviricetes</taxon>
        <taxon>Blubervirales</taxon>
        <taxon>Hepadnaviridae</taxon>
        <taxon>Orthohepadnavirus</taxon>
        <taxon>Woodchuck hepatitis virus</taxon>
    </lineage>
</organism>